<reference key="1">
    <citation type="submission" date="1996-02" db="EMBL/GenBank/DDBJ databases">
        <authorList>
            <person name="Krishnan H.B."/>
            <person name="Karr D.B."/>
            <person name="Emerich D.W."/>
        </authorList>
    </citation>
    <scope>NUCLEOTIDE SEQUENCE [MRNA]</scope>
    <source>
        <strain>cv. Williams 82</strain>
    </source>
</reference>
<keyword id="KW-0067">ATP-binding</keyword>
<keyword id="KW-0418">Kinase</keyword>
<keyword id="KW-0460">Magnesium</keyword>
<keyword id="KW-0479">Metal-binding</keyword>
<keyword id="KW-0546">Nucleotide metabolism</keyword>
<keyword id="KW-0547">Nucleotide-binding</keyword>
<keyword id="KW-0597">Phosphoprotein</keyword>
<keyword id="KW-1185">Reference proteome</keyword>
<keyword id="KW-0808">Transferase</keyword>
<evidence type="ECO:0000250" key="1"/>
<evidence type="ECO:0000305" key="2"/>
<dbReference type="EC" id="2.7.4.6"/>
<dbReference type="EMBL" id="U50150">
    <property type="protein sequence ID" value="AAA93030.1"/>
    <property type="molecule type" value="mRNA"/>
</dbReference>
<dbReference type="PIR" id="T07042">
    <property type="entry name" value="T07042"/>
</dbReference>
<dbReference type="RefSeq" id="NP_001235398.1">
    <property type="nucleotide sequence ID" value="NM_001248469.1"/>
</dbReference>
<dbReference type="SMR" id="Q39839"/>
<dbReference type="FunCoup" id="Q39839">
    <property type="interactions" value="2790"/>
</dbReference>
<dbReference type="STRING" id="3847.Q39839"/>
<dbReference type="PaxDb" id="3847-GLYMA07G13710.1"/>
<dbReference type="ProMEX" id="Q39839"/>
<dbReference type="GeneID" id="547870"/>
<dbReference type="KEGG" id="gmx:547870"/>
<dbReference type="eggNOG" id="KOG0888">
    <property type="taxonomic scope" value="Eukaryota"/>
</dbReference>
<dbReference type="InParanoid" id="Q39839"/>
<dbReference type="Proteomes" id="UP000008827">
    <property type="component" value="Unplaced"/>
</dbReference>
<dbReference type="GO" id="GO:0005524">
    <property type="term" value="F:ATP binding"/>
    <property type="evidence" value="ECO:0007669"/>
    <property type="project" value="UniProtKB-KW"/>
</dbReference>
<dbReference type="GO" id="GO:0046872">
    <property type="term" value="F:metal ion binding"/>
    <property type="evidence" value="ECO:0007669"/>
    <property type="project" value="UniProtKB-KW"/>
</dbReference>
<dbReference type="GO" id="GO:0004550">
    <property type="term" value="F:nucleoside diphosphate kinase activity"/>
    <property type="evidence" value="ECO:0007669"/>
    <property type="project" value="UniProtKB-EC"/>
</dbReference>
<dbReference type="GO" id="GO:0006241">
    <property type="term" value="P:CTP biosynthetic process"/>
    <property type="evidence" value="ECO:0007669"/>
    <property type="project" value="InterPro"/>
</dbReference>
<dbReference type="GO" id="GO:0006183">
    <property type="term" value="P:GTP biosynthetic process"/>
    <property type="evidence" value="ECO:0007669"/>
    <property type="project" value="InterPro"/>
</dbReference>
<dbReference type="GO" id="GO:0006228">
    <property type="term" value="P:UTP biosynthetic process"/>
    <property type="evidence" value="ECO:0007669"/>
    <property type="project" value="InterPro"/>
</dbReference>
<dbReference type="CDD" id="cd04413">
    <property type="entry name" value="NDPk_I"/>
    <property type="match status" value="1"/>
</dbReference>
<dbReference type="FunFam" id="3.30.70.141:FF:000002">
    <property type="entry name" value="Nucleoside diphosphate kinase"/>
    <property type="match status" value="1"/>
</dbReference>
<dbReference type="Gene3D" id="3.30.70.141">
    <property type="entry name" value="Nucleoside diphosphate kinase-like domain"/>
    <property type="match status" value="1"/>
</dbReference>
<dbReference type="HAMAP" id="MF_00451">
    <property type="entry name" value="NDP_kinase"/>
    <property type="match status" value="1"/>
</dbReference>
<dbReference type="InterPro" id="IPR034907">
    <property type="entry name" value="NDK-like_dom"/>
</dbReference>
<dbReference type="InterPro" id="IPR036850">
    <property type="entry name" value="NDK-like_dom_sf"/>
</dbReference>
<dbReference type="InterPro" id="IPR001564">
    <property type="entry name" value="Nucleoside_diP_kinase"/>
</dbReference>
<dbReference type="InterPro" id="IPR023005">
    <property type="entry name" value="Nucleoside_diP_kinase_AS"/>
</dbReference>
<dbReference type="NCBIfam" id="NF001908">
    <property type="entry name" value="PRK00668.1"/>
    <property type="match status" value="1"/>
</dbReference>
<dbReference type="PANTHER" id="PTHR11349">
    <property type="entry name" value="NUCLEOSIDE DIPHOSPHATE KINASE"/>
    <property type="match status" value="1"/>
</dbReference>
<dbReference type="Pfam" id="PF00334">
    <property type="entry name" value="NDK"/>
    <property type="match status" value="1"/>
</dbReference>
<dbReference type="PRINTS" id="PR01243">
    <property type="entry name" value="NUCDPKINASE"/>
</dbReference>
<dbReference type="SMART" id="SM00562">
    <property type="entry name" value="NDK"/>
    <property type="match status" value="1"/>
</dbReference>
<dbReference type="SUPFAM" id="SSF54919">
    <property type="entry name" value="Nucleoside diphosphate kinase, NDK"/>
    <property type="match status" value="1"/>
</dbReference>
<dbReference type="PROSITE" id="PS00469">
    <property type="entry name" value="NDPK"/>
    <property type="match status" value="1"/>
</dbReference>
<dbReference type="PROSITE" id="PS51374">
    <property type="entry name" value="NDPK_LIKE"/>
    <property type="match status" value="1"/>
</dbReference>
<feature type="chain" id="PRO_0000137144" description="Nucleoside diphosphate kinase 1">
    <location>
        <begin position="1"/>
        <end position="149"/>
    </location>
</feature>
<feature type="active site" description="Pros-phosphohistidine intermediate" evidence="1">
    <location>
        <position position="116"/>
    </location>
</feature>
<feature type="binding site" evidence="1">
    <location>
        <position position="10"/>
    </location>
    <ligand>
        <name>ATP</name>
        <dbReference type="ChEBI" id="CHEBI:30616"/>
    </ligand>
</feature>
<feature type="binding site" evidence="1">
    <location>
        <position position="58"/>
    </location>
    <ligand>
        <name>ATP</name>
        <dbReference type="ChEBI" id="CHEBI:30616"/>
    </ligand>
</feature>
<feature type="binding site" evidence="1">
    <location>
        <position position="86"/>
    </location>
    <ligand>
        <name>ATP</name>
        <dbReference type="ChEBI" id="CHEBI:30616"/>
    </ligand>
</feature>
<feature type="binding site" evidence="1">
    <location>
        <position position="92"/>
    </location>
    <ligand>
        <name>ATP</name>
        <dbReference type="ChEBI" id="CHEBI:30616"/>
    </ligand>
</feature>
<feature type="binding site" evidence="1">
    <location>
        <position position="103"/>
    </location>
    <ligand>
        <name>ATP</name>
        <dbReference type="ChEBI" id="CHEBI:30616"/>
    </ligand>
</feature>
<feature type="binding site" evidence="1">
    <location>
        <position position="113"/>
    </location>
    <ligand>
        <name>ATP</name>
        <dbReference type="ChEBI" id="CHEBI:30616"/>
    </ligand>
</feature>
<proteinExistence type="evidence at transcript level"/>
<organism>
    <name type="scientific">Glycine max</name>
    <name type="common">Soybean</name>
    <name type="synonym">Glycine hispida</name>
    <dbReference type="NCBI Taxonomy" id="3847"/>
    <lineage>
        <taxon>Eukaryota</taxon>
        <taxon>Viridiplantae</taxon>
        <taxon>Streptophyta</taxon>
        <taxon>Embryophyta</taxon>
        <taxon>Tracheophyta</taxon>
        <taxon>Spermatophyta</taxon>
        <taxon>Magnoliopsida</taxon>
        <taxon>eudicotyledons</taxon>
        <taxon>Gunneridae</taxon>
        <taxon>Pentapetalae</taxon>
        <taxon>rosids</taxon>
        <taxon>fabids</taxon>
        <taxon>Fabales</taxon>
        <taxon>Fabaceae</taxon>
        <taxon>Papilionoideae</taxon>
        <taxon>50 kb inversion clade</taxon>
        <taxon>NPAAA clade</taxon>
        <taxon>indigoferoid/millettioid clade</taxon>
        <taxon>Phaseoleae</taxon>
        <taxon>Glycine</taxon>
        <taxon>Glycine subgen. Soja</taxon>
    </lineage>
</organism>
<comment type="function">
    <text>Major role in the synthesis of nucleoside triphosphates other than ATP. The ATP gamma phosphate is transferred to the NDP beta phosphate via a ping-pong mechanism, using a phosphorylated active-site intermediate.</text>
</comment>
<comment type="catalytic activity">
    <reaction>
        <text>a 2'-deoxyribonucleoside 5'-diphosphate + ATP = a 2'-deoxyribonucleoside 5'-triphosphate + ADP</text>
        <dbReference type="Rhea" id="RHEA:44640"/>
        <dbReference type="ChEBI" id="CHEBI:30616"/>
        <dbReference type="ChEBI" id="CHEBI:61560"/>
        <dbReference type="ChEBI" id="CHEBI:73316"/>
        <dbReference type="ChEBI" id="CHEBI:456216"/>
        <dbReference type="EC" id="2.7.4.6"/>
    </reaction>
</comment>
<comment type="catalytic activity">
    <reaction>
        <text>a ribonucleoside 5'-diphosphate + ATP = a ribonucleoside 5'-triphosphate + ADP</text>
        <dbReference type="Rhea" id="RHEA:18113"/>
        <dbReference type="ChEBI" id="CHEBI:30616"/>
        <dbReference type="ChEBI" id="CHEBI:57930"/>
        <dbReference type="ChEBI" id="CHEBI:61557"/>
        <dbReference type="ChEBI" id="CHEBI:456216"/>
        <dbReference type="EC" id="2.7.4.6"/>
    </reaction>
</comment>
<comment type="cofactor">
    <cofactor evidence="1">
        <name>Mg(2+)</name>
        <dbReference type="ChEBI" id="CHEBI:18420"/>
    </cofactor>
</comment>
<comment type="similarity">
    <text evidence="2">Belongs to the NDK family.</text>
</comment>
<name>NDK1_SOYBN</name>
<accession>Q39839</accession>
<sequence length="149" mass="16443">MDEQTFIMIKPDGVQRGLIGEIISRFEKKGFYLKGLKLVTVDRPFAEKHYADLSAKPFFSGLVDYIISGPVVAMIWEGKNVVTTGRKIIGATNPAQSEPGTIRGDFAIDIGRNVIHGSDAVESANKEIALWFPEGPANCQSSQHSWIYE</sequence>
<protein>
    <recommendedName>
        <fullName>Nucleoside diphosphate kinase 1</fullName>
        <ecNumber>2.7.4.6</ecNumber>
    </recommendedName>
    <alternativeName>
        <fullName>Nucleoside diphosphate kinase I</fullName>
        <shortName>NDK I</shortName>
        <shortName>NDP kinase I</shortName>
        <shortName>NDPK I</shortName>
    </alternativeName>
</protein>